<evidence type="ECO:0000255" key="1">
    <source>
        <dbReference type="HAMAP-Rule" id="MF_00096"/>
    </source>
</evidence>
<accession>Q9JWT7</accession>
<accession>A1IP93</accession>
<sequence length="864" mass="95249">MSKSAVSPMMQQYLGIKAQHTDKLVFYRMGDFYEMFFDDAVEAAKLLDITLTTRGQVDGEPVKMAGVPFHAAEQYLARLVKLGKSVAICEQVGEVGAGKGPVERKVVRIVTPGTLTDSALLEDKETNRIVAVSPDKKYIGLAWASLQSGEFKTKLTTVDKLDDELARLQAAEILLPDSKNAPQLQTASGVTRLNAWQFAADAGEKLLTEYFGCQDLRGFGLDGKEHAVAIGAAGALLNYIRLTQNLMPQHLDGLSLETDSQYIGMDAATRRNLEITQTLSGKKSPTLMSTLDLCATHMGSRLLALWLHHPLRNRAHIRARQEAVAALESQYKPLQCRLKNIADIERIAARIAVGNARPRDLASLRDSLFELAQIDLSANGSSLLETLKAVFPENLSTAEQLRQAILPEPSVWLKDGNVINHGFHPELDELRRIQNHGDEFLLDLEAKERERTGLSTLKVEFNRVHGFYIELSKTQAEQAPADYQRRQTLKNAERFITPELKAFEDKVLTAQEQALALEKQLFDGVLKNLQTALPQLQKAAKAAAALDVLSTFSALAKERNFVRPEFADYPAIHIENGRHPVVEQQVRHFTANHTNLDHKHRLMLLTGPNMGGKSTYMRQVALIVLLAHTGCFVPADAATIGPIDQIFTRIGASDDLASNRSTFMVEMSETAYILHHATEQSLVLMDEVGRGTSTFDGLALAHAVAEHLLQKNKSFSLFATHYFELTYLPEAHAAAVNMHLSALEQGQDIVFLHQIQPGPAGKSYGIAVAKLAGLPVRALKSAQKHLNGLENQAAANRPQLDIFSTMPSEKGDEPNVGNFVDKAEEKHFEGILAAALEKLDPDSLTPREALSELYRLKDLCKSVS</sequence>
<keyword id="KW-0067">ATP-binding</keyword>
<keyword id="KW-0227">DNA damage</keyword>
<keyword id="KW-0234">DNA repair</keyword>
<keyword id="KW-0238">DNA-binding</keyword>
<keyword id="KW-0547">Nucleotide-binding</keyword>
<feature type="chain" id="PRO_0000115111" description="DNA mismatch repair protein MutS">
    <location>
        <begin position="1"/>
        <end position="864"/>
    </location>
</feature>
<feature type="binding site" evidence="1">
    <location>
        <begin position="607"/>
        <end position="614"/>
    </location>
    <ligand>
        <name>ATP</name>
        <dbReference type="ChEBI" id="CHEBI:30616"/>
    </ligand>
</feature>
<protein>
    <recommendedName>
        <fullName evidence="1">DNA mismatch repair protein MutS</fullName>
    </recommendedName>
</protein>
<reference key="1">
    <citation type="journal article" date="2000" name="Nature">
        <title>Complete DNA sequence of a serogroup A strain of Neisseria meningitidis Z2491.</title>
        <authorList>
            <person name="Parkhill J."/>
            <person name="Achtman M."/>
            <person name="James K.D."/>
            <person name="Bentley S.D."/>
            <person name="Churcher C.M."/>
            <person name="Klee S.R."/>
            <person name="Morelli G."/>
            <person name="Basham D."/>
            <person name="Brown D."/>
            <person name="Chillingworth T."/>
            <person name="Davies R.M."/>
            <person name="Davis P."/>
            <person name="Devlin K."/>
            <person name="Feltwell T."/>
            <person name="Hamlin N."/>
            <person name="Holroyd S."/>
            <person name="Jagels K."/>
            <person name="Leather S."/>
            <person name="Moule S."/>
            <person name="Mungall K.L."/>
            <person name="Quail M.A."/>
            <person name="Rajandream M.A."/>
            <person name="Rutherford K.M."/>
            <person name="Simmonds M."/>
            <person name="Skelton J."/>
            <person name="Whitehead S."/>
            <person name="Spratt B.G."/>
            <person name="Barrell B.G."/>
        </authorList>
    </citation>
    <scope>NUCLEOTIDE SEQUENCE [LARGE SCALE GENOMIC DNA]</scope>
    <source>
        <strain>DSM 15465 / Z2491</strain>
    </source>
</reference>
<proteinExistence type="inferred from homology"/>
<gene>
    <name evidence="1" type="primary">mutS</name>
    <name type="ordered locus">NMA0247</name>
</gene>
<name>MUTS_NEIMA</name>
<comment type="function">
    <text evidence="1">This protein is involved in the repair of mismatches in DNA. It is possible that it carries out the mismatch recognition step. This protein has a weak ATPase activity.</text>
</comment>
<comment type="similarity">
    <text evidence="1">Belongs to the DNA mismatch repair MutS family.</text>
</comment>
<organism>
    <name type="scientific">Neisseria meningitidis serogroup A / serotype 4A (strain DSM 15465 / Z2491)</name>
    <dbReference type="NCBI Taxonomy" id="122587"/>
    <lineage>
        <taxon>Bacteria</taxon>
        <taxon>Pseudomonadati</taxon>
        <taxon>Pseudomonadota</taxon>
        <taxon>Betaproteobacteria</taxon>
        <taxon>Neisseriales</taxon>
        <taxon>Neisseriaceae</taxon>
        <taxon>Neisseria</taxon>
    </lineage>
</organism>
<dbReference type="EMBL" id="AL157959">
    <property type="protein sequence ID" value="CAM07553.1"/>
    <property type="molecule type" value="Genomic_DNA"/>
</dbReference>
<dbReference type="PIR" id="C82019">
    <property type="entry name" value="C82019"/>
</dbReference>
<dbReference type="RefSeq" id="WP_002246565.1">
    <property type="nucleotide sequence ID" value="NC_003116.1"/>
</dbReference>
<dbReference type="SMR" id="Q9JWT7"/>
<dbReference type="EnsemblBacteria" id="CAM07553">
    <property type="protein sequence ID" value="CAM07553"/>
    <property type="gene ID" value="NMA0247"/>
</dbReference>
<dbReference type="KEGG" id="nma:NMA0247"/>
<dbReference type="HOGENOM" id="CLU_002472_4_1_4"/>
<dbReference type="Proteomes" id="UP000000626">
    <property type="component" value="Chromosome"/>
</dbReference>
<dbReference type="GO" id="GO:0005829">
    <property type="term" value="C:cytosol"/>
    <property type="evidence" value="ECO:0007669"/>
    <property type="project" value="TreeGrafter"/>
</dbReference>
<dbReference type="GO" id="GO:0005524">
    <property type="term" value="F:ATP binding"/>
    <property type="evidence" value="ECO:0007669"/>
    <property type="project" value="UniProtKB-UniRule"/>
</dbReference>
<dbReference type="GO" id="GO:0140664">
    <property type="term" value="F:ATP-dependent DNA damage sensor activity"/>
    <property type="evidence" value="ECO:0007669"/>
    <property type="project" value="InterPro"/>
</dbReference>
<dbReference type="GO" id="GO:0003684">
    <property type="term" value="F:damaged DNA binding"/>
    <property type="evidence" value="ECO:0007669"/>
    <property type="project" value="UniProtKB-UniRule"/>
</dbReference>
<dbReference type="GO" id="GO:0030983">
    <property type="term" value="F:mismatched DNA binding"/>
    <property type="evidence" value="ECO:0007669"/>
    <property type="project" value="InterPro"/>
</dbReference>
<dbReference type="GO" id="GO:0006298">
    <property type="term" value="P:mismatch repair"/>
    <property type="evidence" value="ECO:0007669"/>
    <property type="project" value="UniProtKB-UniRule"/>
</dbReference>
<dbReference type="CDD" id="cd03284">
    <property type="entry name" value="ABC_MutS1"/>
    <property type="match status" value="1"/>
</dbReference>
<dbReference type="FunFam" id="1.10.1420.10:FF:000018">
    <property type="entry name" value="DNA mismatch repair protein MutS"/>
    <property type="match status" value="1"/>
</dbReference>
<dbReference type="FunFam" id="3.40.1170.10:FF:000001">
    <property type="entry name" value="DNA mismatch repair protein MutS"/>
    <property type="match status" value="1"/>
</dbReference>
<dbReference type="FunFam" id="3.40.50.300:FF:000283">
    <property type="entry name" value="DNA mismatch repair protein MutS"/>
    <property type="match status" value="1"/>
</dbReference>
<dbReference type="Gene3D" id="1.10.1420.10">
    <property type="match status" value="2"/>
</dbReference>
<dbReference type="Gene3D" id="6.10.140.430">
    <property type="match status" value="1"/>
</dbReference>
<dbReference type="Gene3D" id="3.40.1170.10">
    <property type="entry name" value="DNA repair protein MutS, domain I"/>
    <property type="match status" value="1"/>
</dbReference>
<dbReference type="Gene3D" id="3.30.420.110">
    <property type="entry name" value="MutS, connector domain"/>
    <property type="match status" value="1"/>
</dbReference>
<dbReference type="Gene3D" id="3.40.50.300">
    <property type="entry name" value="P-loop containing nucleotide triphosphate hydrolases"/>
    <property type="match status" value="1"/>
</dbReference>
<dbReference type="HAMAP" id="MF_00096">
    <property type="entry name" value="MutS"/>
    <property type="match status" value="1"/>
</dbReference>
<dbReference type="InterPro" id="IPR005748">
    <property type="entry name" value="DNA_mismatch_repair_MutS"/>
</dbReference>
<dbReference type="InterPro" id="IPR007695">
    <property type="entry name" value="DNA_mismatch_repair_MutS-lik_N"/>
</dbReference>
<dbReference type="InterPro" id="IPR017261">
    <property type="entry name" value="DNA_mismatch_repair_MutS/MSH"/>
</dbReference>
<dbReference type="InterPro" id="IPR000432">
    <property type="entry name" value="DNA_mismatch_repair_MutS_C"/>
</dbReference>
<dbReference type="InterPro" id="IPR007861">
    <property type="entry name" value="DNA_mismatch_repair_MutS_clamp"/>
</dbReference>
<dbReference type="InterPro" id="IPR007696">
    <property type="entry name" value="DNA_mismatch_repair_MutS_core"/>
</dbReference>
<dbReference type="InterPro" id="IPR016151">
    <property type="entry name" value="DNA_mismatch_repair_MutS_N"/>
</dbReference>
<dbReference type="InterPro" id="IPR036187">
    <property type="entry name" value="DNA_mismatch_repair_MutS_sf"/>
</dbReference>
<dbReference type="InterPro" id="IPR007860">
    <property type="entry name" value="DNA_mmatch_repair_MutS_con_dom"/>
</dbReference>
<dbReference type="InterPro" id="IPR045076">
    <property type="entry name" value="MutS"/>
</dbReference>
<dbReference type="InterPro" id="IPR036678">
    <property type="entry name" value="MutS_con_dom_sf"/>
</dbReference>
<dbReference type="InterPro" id="IPR027417">
    <property type="entry name" value="P-loop_NTPase"/>
</dbReference>
<dbReference type="NCBIfam" id="TIGR01070">
    <property type="entry name" value="mutS1"/>
    <property type="match status" value="1"/>
</dbReference>
<dbReference type="NCBIfam" id="NF003810">
    <property type="entry name" value="PRK05399.1"/>
    <property type="match status" value="1"/>
</dbReference>
<dbReference type="PANTHER" id="PTHR11361:SF34">
    <property type="entry name" value="DNA MISMATCH REPAIR PROTEIN MSH1, MITOCHONDRIAL"/>
    <property type="match status" value="1"/>
</dbReference>
<dbReference type="PANTHER" id="PTHR11361">
    <property type="entry name" value="DNA MISMATCH REPAIR PROTEIN MUTS FAMILY MEMBER"/>
    <property type="match status" value="1"/>
</dbReference>
<dbReference type="Pfam" id="PF01624">
    <property type="entry name" value="MutS_I"/>
    <property type="match status" value="1"/>
</dbReference>
<dbReference type="Pfam" id="PF05188">
    <property type="entry name" value="MutS_II"/>
    <property type="match status" value="1"/>
</dbReference>
<dbReference type="Pfam" id="PF05192">
    <property type="entry name" value="MutS_III"/>
    <property type="match status" value="1"/>
</dbReference>
<dbReference type="Pfam" id="PF05190">
    <property type="entry name" value="MutS_IV"/>
    <property type="match status" value="1"/>
</dbReference>
<dbReference type="Pfam" id="PF00488">
    <property type="entry name" value="MutS_V"/>
    <property type="match status" value="1"/>
</dbReference>
<dbReference type="PIRSF" id="PIRSF037677">
    <property type="entry name" value="DNA_mis_repair_Msh6"/>
    <property type="match status" value="1"/>
</dbReference>
<dbReference type="SMART" id="SM00534">
    <property type="entry name" value="MUTSac"/>
    <property type="match status" value="1"/>
</dbReference>
<dbReference type="SMART" id="SM00533">
    <property type="entry name" value="MUTSd"/>
    <property type="match status" value="1"/>
</dbReference>
<dbReference type="SUPFAM" id="SSF55271">
    <property type="entry name" value="DNA repair protein MutS, domain I"/>
    <property type="match status" value="1"/>
</dbReference>
<dbReference type="SUPFAM" id="SSF53150">
    <property type="entry name" value="DNA repair protein MutS, domain II"/>
    <property type="match status" value="1"/>
</dbReference>
<dbReference type="SUPFAM" id="SSF48334">
    <property type="entry name" value="DNA repair protein MutS, domain III"/>
    <property type="match status" value="1"/>
</dbReference>
<dbReference type="SUPFAM" id="SSF52540">
    <property type="entry name" value="P-loop containing nucleoside triphosphate hydrolases"/>
    <property type="match status" value="1"/>
</dbReference>
<dbReference type="PROSITE" id="PS00486">
    <property type="entry name" value="DNA_MISMATCH_REPAIR_2"/>
    <property type="match status" value="1"/>
</dbReference>